<gene>
    <name evidence="1" type="primary">clpP1</name>
    <name type="ordered locus">RHA1_ro01371</name>
</gene>
<evidence type="ECO:0000255" key="1">
    <source>
        <dbReference type="HAMAP-Rule" id="MF_00444"/>
    </source>
</evidence>
<accession>Q0SGZ1</accession>
<dbReference type="EC" id="3.4.21.92" evidence="1"/>
<dbReference type="EMBL" id="CP000431">
    <property type="protein sequence ID" value="ABG93195.1"/>
    <property type="molecule type" value="Genomic_DNA"/>
</dbReference>
<dbReference type="RefSeq" id="WP_009474075.1">
    <property type="nucleotide sequence ID" value="NC_008268.1"/>
</dbReference>
<dbReference type="SMR" id="Q0SGZ1"/>
<dbReference type="MEROPS" id="S14.009"/>
<dbReference type="KEGG" id="rha:RHA1_ro01371"/>
<dbReference type="eggNOG" id="COG0740">
    <property type="taxonomic scope" value="Bacteria"/>
</dbReference>
<dbReference type="HOGENOM" id="CLU_058707_3_2_11"/>
<dbReference type="OrthoDB" id="9802800at2"/>
<dbReference type="Proteomes" id="UP000008710">
    <property type="component" value="Chromosome"/>
</dbReference>
<dbReference type="GO" id="GO:0005737">
    <property type="term" value="C:cytoplasm"/>
    <property type="evidence" value="ECO:0007669"/>
    <property type="project" value="UniProtKB-SubCell"/>
</dbReference>
<dbReference type="GO" id="GO:0009368">
    <property type="term" value="C:endopeptidase Clp complex"/>
    <property type="evidence" value="ECO:0007669"/>
    <property type="project" value="TreeGrafter"/>
</dbReference>
<dbReference type="GO" id="GO:0004176">
    <property type="term" value="F:ATP-dependent peptidase activity"/>
    <property type="evidence" value="ECO:0007669"/>
    <property type="project" value="InterPro"/>
</dbReference>
<dbReference type="GO" id="GO:0051117">
    <property type="term" value="F:ATPase binding"/>
    <property type="evidence" value="ECO:0007669"/>
    <property type="project" value="TreeGrafter"/>
</dbReference>
<dbReference type="GO" id="GO:0004252">
    <property type="term" value="F:serine-type endopeptidase activity"/>
    <property type="evidence" value="ECO:0007669"/>
    <property type="project" value="UniProtKB-UniRule"/>
</dbReference>
<dbReference type="GO" id="GO:0006515">
    <property type="term" value="P:protein quality control for misfolded or incompletely synthesized proteins"/>
    <property type="evidence" value="ECO:0007669"/>
    <property type="project" value="TreeGrafter"/>
</dbReference>
<dbReference type="CDD" id="cd07017">
    <property type="entry name" value="S14_ClpP_2"/>
    <property type="match status" value="1"/>
</dbReference>
<dbReference type="FunFam" id="3.90.226.10:FF:000002">
    <property type="entry name" value="ATP-dependent Clp protease proteolytic subunit"/>
    <property type="match status" value="1"/>
</dbReference>
<dbReference type="Gene3D" id="3.90.226.10">
    <property type="entry name" value="2-enoyl-CoA Hydratase, Chain A, domain 1"/>
    <property type="match status" value="1"/>
</dbReference>
<dbReference type="HAMAP" id="MF_00444">
    <property type="entry name" value="ClpP"/>
    <property type="match status" value="1"/>
</dbReference>
<dbReference type="InterPro" id="IPR001907">
    <property type="entry name" value="ClpP"/>
</dbReference>
<dbReference type="InterPro" id="IPR029045">
    <property type="entry name" value="ClpP/crotonase-like_dom_sf"/>
</dbReference>
<dbReference type="InterPro" id="IPR023562">
    <property type="entry name" value="ClpP/TepA"/>
</dbReference>
<dbReference type="InterPro" id="IPR033135">
    <property type="entry name" value="ClpP_His_AS"/>
</dbReference>
<dbReference type="InterPro" id="IPR018215">
    <property type="entry name" value="ClpP_Ser_AS"/>
</dbReference>
<dbReference type="NCBIfam" id="NF001368">
    <property type="entry name" value="PRK00277.1"/>
    <property type="match status" value="1"/>
</dbReference>
<dbReference type="NCBIfam" id="NF009205">
    <property type="entry name" value="PRK12553.1"/>
    <property type="match status" value="1"/>
</dbReference>
<dbReference type="PANTHER" id="PTHR10381">
    <property type="entry name" value="ATP-DEPENDENT CLP PROTEASE PROTEOLYTIC SUBUNIT"/>
    <property type="match status" value="1"/>
</dbReference>
<dbReference type="PANTHER" id="PTHR10381:SF26">
    <property type="entry name" value="ATP-DEPENDENT CLP PROTEASE PROTEOLYTIC SUBUNIT-LIKE-RELATED"/>
    <property type="match status" value="1"/>
</dbReference>
<dbReference type="Pfam" id="PF00574">
    <property type="entry name" value="CLP_protease"/>
    <property type="match status" value="1"/>
</dbReference>
<dbReference type="PRINTS" id="PR00127">
    <property type="entry name" value="CLPPROTEASEP"/>
</dbReference>
<dbReference type="SUPFAM" id="SSF52096">
    <property type="entry name" value="ClpP/crotonase"/>
    <property type="match status" value="1"/>
</dbReference>
<dbReference type="PROSITE" id="PS00382">
    <property type="entry name" value="CLP_PROTEASE_HIS"/>
    <property type="match status" value="1"/>
</dbReference>
<dbReference type="PROSITE" id="PS00381">
    <property type="entry name" value="CLP_PROTEASE_SER"/>
    <property type="match status" value="1"/>
</dbReference>
<feature type="chain" id="PRO_0000252838" description="ATP-dependent Clp protease proteolytic subunit 1">
    <location>
        <begin position="1"/>
        <end position="220"/>
    </location>
</feature>
<feature type="active site" description="Nucleophile" evidence="1">
    <location>
        <position position="118"/>
    </location>
</feature>
<feature type="active site" evidence="1">
    <location>
        <position position="143"/>
    </location>
</feature>
<name>CLPP1_RHOJR</name>
<organism>
    <name type="scientific">Rhodococcus jostii (strain RHA1)</name>
    <dbReference type="NCBI Taxonomy" id="101510"/>
    <lineage>
        <taxon>Bacteria</taxon>
        <taxon>Bacillati</taxon>
        <taxon>Actinomycetota</taxon>
        <taxon>Actinomycetes</taxon>
        <taxon>Mycobacteriales</taxon>
        <taxon>Nocardiaceae</taxon>
        <taxon>Rhodococcus</taxon>
    </lineage>
</organism>
<sequence length="220" mass="23973">MTNLFDPRSLGGQAPAGPQSRYILPSFIEHSSYGVKESNPYNKLFEERIIFLGVQVDDASANDVMAQLLVLESLDPDRDITMYINSPGGSFTSLMAIYDTMQYVRADITTVCLGQAASAAAVLLAAGSPGKRLALPNARVLIHQPATGGIQGQVSDLEIQAAEIERMRRLMETTLAKHTGKDAAVIRKDTDRDKILTAAEAKEYGIIDDVLEYRKLSAQK</sequence>
<reference key="1">
    <citation type="journal article" date="2006" name="Proc. Natl. Acad. Sci. U.S.A.">
        <title>The complete genome of Rhodococcus sp. RHA1 provides insights into a catabolic powerhouse.</title>
        <authorList>
            <person name="McLeod M.P."/>
            <person name="Warren R.L."/>
            <person name="Hsiao W.W.L."/>
            <person name="Araki N."/>
            <person name="Myhre M."/>
            <person name="Fernandes C."/>
            <person name="Miyazawa D."/>
            <person name="Wong W."/>
            <person name="Lillquist A.L."/>
            <person name="Wang D."/>
            <person name="Dosanjh M."/>
            <person name="Hara H."/>
            <person name="Petrescu A."/>
            <person name="Morin R.D."/>
            <person name="Yang G."/>
            <person name="Stott J.M."/>
            <person name="Schein J.E."/>
            <person name="Shin H."/>
            <person name="Smailus D."/>
            <person name="Siddiqui A.S."/>
            <person name="Marra M.A."/>
            <person name="Jones S.J.M."/>
            <person name="Holt R."/>
            <person name="Brinkman F.S.L."/>
            <person name="Miyauchi K."/>
            <person name="Fukuda M."/>
            <person name="Davies J.E."/>
            <person name="Mohn W.W."/>
            <person name="Eltis L.D."/>
        </authorList>
    </citation>
    <scope>NUCLEOTIDE SEQUENCE [LARGE SCALE GENOMIC DNA]</scope>
    <source>
        <strain>RHA1</strain>
    </source>
</reference>
<proteinExistence type="inferred from homology"/>
<protein>
    <recommendedName>
        <fullName evidence="1">ATP-dependent Clp protease proteolytic subunit 1</fullName>
        <ecNumber evidence="1">3.4.21.92</ecNumber>
    </recommendedName>
    <alternativeName>
        <fullName evidence="1">Endopeptidase Clp 1</fullName>
    </alternativeName>
</protein>
<comment type="function">
    <text evidence="1">Cleaves peptides in various proteins in a process that requires ATP hydrolysis. Has a chymotrypsin-like activity. Plays a major role in the degradation of misfolded proteins.</text>
</comment>
<comment type="catalytic activity">
    <reaction evidence="1">
        <text>Hydrolysis of proteins to small peptides in the presence of ATP and magnesium. alpha-casein is the usual test substrate. In the absence of ATP, only oligopeptides shorter than five residues are hydrolyzed (such as succinyl-Leu-Tyr-|-NHMec, and Leu-Tyr-Leu-|-Tyr-Trp, in which cleavage of the -Tyr-|-Leu- and -Tyr-|-Trp bonds also occurs).</text>
        <dbReference type="EC" id="3.4.21.92"/>
    </reaction>
</comment>
<comment type="subunit">
    <text evidence="1">Fourteen ClpP subunits assemble into 2 heptameric rings which stack back to back to give a disk-like structure with a central cavity, resembling the structure of eukaryotic proteasomes.</text>
</comment>
<comment type="subcellular location">
    <subcellularLocation>
        <location evidence="1">Cytoplasm</location>
    </subcellularLocation>
</comment>
<comment type="similarity">
    <text evidence="1">Belongs to the peptidase S14 family.</text>
</comment>
<keyword id="KW-0963">Cytoplasm</keyword>
<keyword id="KW-0378">Hydrolase</keyword>
<keyword id="KW-0645">Protease</keyword>
<keyword id="KW-0720">Serine protease</keyword>